<sequence>MSENHETVVSELNEESGGGCPVAHERAPHPTQGGGNRGWWPNRLNLKILAKNPAVANPLGEEFDYAAAFRTLDLPAVKRDIAQVLTTSQDWWPADYGHYGPFMIRMAWHSAGTYRISDGRGGGGAGQQRFAPLNSWPDNGNLDKARRLLWPVKKKYGQALSWADLMILAGNVALESMGFTTFGFAGGREDVWEPDEDVYWGPETTWLGDERYTGDRELENPLGAVQMGLIYVNPEGPNGTPDPLAAARDIRETFRRMAMDDEETVALIAGGHTFGKTHGAGDPDNVGPEPEGAPLETQGLGWKNAFGTGKGADAITSGLEGAWTPTPVSWDNSFFETLFGYEWALTKSPAGAYQWKPKGGAGAGTVPDAHDAAKSHAPTMLTTDLALRFDPVYEPISRRFLEHPDELADAFARAWFKLTHRDMGPVARYLGPEVPAETLLWQDPVPAVDHELVDAADVAALKVRVLASGLSVSELVATAWASASTFRGGDKRGGANGARIRLEPQRGWEVNEPDRLAAVLGTLTGIQEEFHAARTDGRRVSLADLIVLAGGAAVEQAAREAGFDVEVPFTPGRTDASQELTDVESFAALEPAADGFRNYLGKGQRLPAEYLLLDRANLLTLSAPELTVLVGGLRVLGANFRQSSLGVLTATPGVLTNDFFANLLDLGTTWRPSGEDDNVFEGRDAATGELTWTGSRVDLVFGSNSELRAFAEVYASDDAREKFVRDFVAAWAKVMNLDRYDLA</sequence>
<proteinExistence type="inferred from homology"/>
<accession>A8LBC6</accession>
<protein>
    <recommendedName>
        <fullName evidence="1">Catalase-peroxidase</fullName>
        <shortName evidence="1">CP</shortName>
        <ecNumber evidence="1">1.11.1.21</ecNumber>
    </recommendedName>
    <alternativeName>
        <fullName evidence="1">Peroxidase/catalase</fullName>
    </alternativeName>
</protein>
<evidence type="ECO:0000255" key="1">
    <source>
        <dbReference type="HAMAP-Rule" id="MF_01961"/>
    </source>
</evidence>
<evidence type="ECO:0000256" key="2">
    <source>
        <dbReference type="SAM" id="MobiDB-lite"/>
    </source>
</evidence>
<reference key="1">
    <citation type="journal article" date="2007" name="Genome Res.">
        <title>Genome characteristics of facultatively symbiotic Frankia sp. strains reflect host range and host plant biogeography.</title>
        <authorList>
            <person name="Normand P."/>
            <person name="Lapierre P."/>
            <person name="Tisa L.S."/>
            <person name="Gogarten J.P."/>
            <person name="Alloisio N."/>
            <person name="Bagnarol E."/>
            <person name="Bassi C.A."/>
            <person name="Berry A.M."/>
            <person name="Bickhart D.M."/>
            <person name="Choisne N."/>
            <person name="Couloux A."/>
            <person name="Cournoyer B."/>
            <person name="Cruveiller S."/>
            <person name="Daubin V."/>
            <person name="Demange N."/>
            <person name="Francino M.P."/>
            <person name="Goltsman E."/>
            <person name="Huang Y."/>
            <person name="Kopp O.R."/>
            <person name="Labarre L."/>
            <person name="Lapidus A."/>
            <person name="Lavire C."/>
            <person name="Marechal J."/>
            <person name="Martinez M."/>
            <person name="Mastronunzio J.E."/>
            <person name="Mullin B.C."/>
            <person name="Niemann J."/>
            <person name="Pujic P."/>
            <person name="Rawnsley T."/>
            <person name="Rouy Z."/>
            <person name="Schenowitz C."/>
            <person name="Sellstedt A."/>
            <person name="Tavares F."/>
            <person name="Tomkins J.P."/>
            <person name="Vallenet D."/>
            <person name="Valverde C."/>
            <person name="Wall L.G."/>
            <person name="Wang Y."/>
            <person name="Medigue C."/>
            <person name="Benson D.R."/>
        </authorList>
    </citation>
    <scope>NUCLEOTIDE SEQUENCE [LARGE SCALE GENOMIC DNA]</scope>
    <source>
        <strain>EAN1pec</strain>
    </source>
</reference>
<comment type="function">
    <text evidence="1">Bifunctional enzyme with both catalase and broad-spectrum peroxidase activity.</text>
</comment>
<comment type="catalytic activity">
    <reaction evidence="1">
        <text>H2O2 + AH2 = A + 2 H2O</text>
        <dbReference type="Rhea" id="RHEA:30275"/>
        <dbReference type="ChEBI" id="CHEBI:13193"/>
        <dbReference type="ChEBI" id="CHEBI:15377"/>
        <dbReference type="ChEBI" id="CHEBI:16240"/>
        <dbReference type="ChEBI" id="CHEBI:17499"/>
        <dbReference type="EC" id="1.11.1.21"/>
    </reaction>
</comment>
<comment type="catalytic activity">
    <reaction evidence="1">
        <text>2 H2O2 = O2 + 2 H2O</text>
        <dbReference type="Rhea" id="RHEA:20309"/>
        <dbReference type="ChEBI" id="CHEBI:15377"/>
        <dbReference type="ChEBI" id="CHEBI:15379"/>
        <dbReference type="ChEBI" id="CHEBI:16240"/>
        <dbReference type="EC" id="1.11.1.21"/>
    </reaction>
</comment>
<comment type="cofactor">
    <cofactor evidence="1">
        <name>heme b</name>
        <dbReference type="ChEBI" id="CHEBI:60344"/>
    </cofactor>
    <text evidence="1">Binds 1 heme b (iron(II)-protoporphyrin IX) group per dimer.</text>
</comment>
<comment type="subunit">
    <text evidence="1">Homodimer or homotetramer.</text>
</comment>
<comment type="PTM">
    <text evidence="1">Formation of the three residue Trp-Tyr-Met cross-link is important for the catalase, but not the peroxidase activity of the enzyme.</text>
</comment>
<comment type="similarity">
    <text evidence="1">Belongs to the peroxidase family. Peroxidase/catalase subfamily.</text>
</comment>
<feature type="chain" id="PRO_0000354798" description="Catalase-peroxidase">
    <location>
        <begin position="1"/>
        <end position="743"/>
    </location>
</feature>
<feature type="region of interest" description="Disordered" evidence="2">
    <location>
        <begin position="1"/>
        <end position="21"/>
    </location>
</feature>
<feature type="region of interest" description="Disordered" evidence="2">
    <location>
        <begin position="275"/>
        <end position="296"/>
    </location>
</feature>
<feature type="active site" description="Proton acceptor" evidence="1">
    <location>
        <position position="109"/>
    </location>
</feature>
<feature type="binding site" description="axial binding residue" evidence="1">
    <location>
        <position position="272"/>
    </location>
    <ligand>
        <name>heme b</name>
        <dbReference type="ChEBI" id="CHEBI:60344"/>
    </ligand>
    <ligandPart>
        <name>Fe</name>
        <dbReference type="ChEBI" id="CHEBI:18248"/>
    </ligandPart>
</feature>
<feature type="site" description="Transition state stabilizer" evidence="1">
    <location>
        <position position="105"/>
    </location>
</feature>
<feature type="cross-link" description="Tryptophyl-tyrosyl-methioninium (Trp-Tyr) (with M-257)" evidence="1">
    <location>
        <begin position="108"/>
        <end position="231"/>
    </location>
</feature>
<feature type="cross-link" description="Tryptophyl-tyrosyl-methioninium (Tyr-Met) (with W-108)" evidence="1">
    <location>
        <begin position="231"/>
        <end position="257"/>
    </location>
</feature>
<dbReference type="EC" id="1.11.1.21" evidence="1"/>
<dbReference type="EMBL" id="CP000820">
    <property type="protein sequence ID" value="ABW10973.1"/>
    <property type="molecule type" value="Genomic_DNA"/>
</dbReference>
<dbReference type="RefSeq" id="WP_020459147.1">
    <property type="nucleotide sequence ID" value="NC_009921.1"/>
</dbReference>
<dbReference type="SMR" id="A8LBC6"/>
<dbReference type="STRING" id="298653.Franean1_1533"/>
<dbReference type="PeroxiBase" id="2353">
    <property type="entry name" value="FspCP_EAN1pec"/>
</dbReference>
<dbReference type="KEGG" id="fre:Franean1_1533"/>
<dbReference type="eggNOG" id="COG0376">
    <property type="taxonomic scope" value="Bacteria"/>
</dbReference>
<dbReference type="HOGENOM" id="CLU_025424_2_0_11"/>
<dbReference type="GO" id="GO:0005829">
    <property type="term" value="C:cytosol"/>
    <property type="evidence" value="ECO:0007669"/>
    <property type="project" value="TreeGrafter"/>
</dbReference>
<dbReference type="GO" id="GO:0004096">
    <property type="term" value="F:catalase activity"/>
    <property type="evidence" value="ECO:0007669"/>
    <property type="project" value="UniProtKB-UniRule"/>
</dbReference>
<dbReference type="GO" id="GO:0020037">
    <property type="term" value="F:heme binding"/>
    <property type="evidence" value="ECO:0007669"/>
    <property type="project" value="InterPro"/>
</dbReference>
<dbReference type="GO" id="GO:0046872">
    <property type="term" value="F:metal ion binding"/>
    <property type="evidence" value="ECO:0007669"/>
    <property type="project" value="UniProtKB-KW"/>
</dbReference>
<dbReference type="GO" id="GO:0070301">
    <property type="term" value="P:cellular response to hydrogen peroxide"/>
    <property type="evidence" value="ECO:0007669"/>
    <property type="project" value="TreeGrafter"/>
</dbReference>
<dbReference type="GO" id="GO:0042744">
    <property type="term" value="P:hydrogen peroxide catabolic process"/>
    <property type="evidence" value="ECO:0007669"/>
    <property type="project" value="UniProtKB-KW"/>
</dbReference>
<dbReference type="CDD" id="cd00649">
    <property type="entry name" value="catalase_peroxidase_1"/>
    <property type="match status" value="1"/>
</dbReference>
<dbReference type="CDD" id="cd08200">
    <property type="entry name" value="catalase_peroxidase_2"/>
    <property type="match status" value="1"/>
</dbReference>
<dbReference type="FunFam" id="1.10.420.10:FF:000002">
    <property type="entry name" value="Catalase-peroxidase"/>
    <property type="match status" value="1"/>
</dbReference>
<dbReference type="FunFam" id="1.10.420.10:FF:000004">
    <property type="entry name" value="Catalase-peroxidase"/>
    <property type="match status" value="1"/>
</dbReference>
<dbReference type="FunFam" id="1.10.520.10:FF:000002">
    <property type="entry name" value="Catalase-peroxidase"/>
    <property type="match status" value="1"/>
</dbReference>
<dbReference type="Gene3D" id="1.10.520.10">
    <property type="match status" value="2"/>
</dbReference>
<dbReference type="Gene3D" id="1.10.420.10">
    <property type="entry name" value="Peroxidase, domain 2"/>
    <property type="match status" value="2"/>
</dbReference>
<dbReference type="HAMAP" id="MF_01961">
    <property type="entry name" value="Catal_peroxid"/>
    <property type="match status" value="1"/>
</dbReference>
<dbReference type="InterPro" id="IPR000763">
    <property type="entry name" value="Catalase_peroxidase"/>
</dbReference>
<dbReference type="InterPro" id="IPR002016">
    <property type="entry name" value="Haem_peroxidase"/>
</dbReference>
<dbReference type="InterPro" id="IPR010255">
    <property type="entry name" value="Haem_peroxidase_sf"/>
</dbReference>
<dbReference type="InterPro" id="IPR019794">
    <property type="entry name" value="Peroxidases_AS"/>
</dbReference>
<dbReference type="InterPro" id="IPR019793">
    <property type="entry name" value="Peroxidases_heam-ligand_BS"/>
</dbReference>
<dbReference type="NCBIfam" id="TIGR00198">
    <property type="entry name" value="cat_per_HPI"/>
    <property type="match status" value="1"/>
</dbReference>
<dbReference type="NCBIfam" id="NF011635">
    <property type="entry name" value="PRK15061.1"/>
    <property type="match status" value="1"/>
</dbReference>
<dbReference type="PANTHER" id="PTHR30555:SF0">
    <property type="entry name" value="CATALASE-PEROXIDASE"/>
    <property type="match status" value="1"/>
</dbReference>
<dbReference type="PANTHER" id="PTHR30555">
    <property type="entry name" value="HYDROPEROXIDASE I, BIFUNCTIONAL CATALASE-PEROXIDASE"/>
    <property type="match status" value="1"/>
</dbReference>
<dbReference type="Pfam" id="PF00141">
    <property type="entry name" value="peroxidase"/>
    <property type="match status" value="2"/>
</dbReference>
<dbReference type="PRINTS" id="PR00460">
    <property type="entry name" value="BPEROXIDASE"/>
</dbReference>
<dbReference type="PRINTS" id="PR00458">
    <property type="entry name" value="PEROXIDASE"/>
</dbReference>
<dbReference type="SUPFAM" id="SSF48113">
    <property type="entry name" value="Heme-dependent peroxidases"/>
    <property type="match status" value="2"/>
</dbReference>
<dbReference type="PROSITE" id="PS00435">
    <property type="entry name" value="PEROXIDASE_1"/>
    <property type="match status" value="1"/>
</dbReference>
<dbReference type="PROSITE" id="PS00436">
    <property type="entry name" value="PEROXIDASE_2"/>
    <property type="match status" value="1"/>
</dbReference>
<dbReference type="PROSITE" id="PS50873">
    <property type="entry name" value="PEROXIDASE_4"/>
    <property type="match status" value="1"/>
</dbReference>
<gene>
    <name evidence="1" type="primary">katG</name>
    <name type="ordered locus">Franean1_1533</name>
</gene>
<name>KATG_PARS2</name>
<keyword id="KW-0349">Heme</keyword>
<keyword id="KW-0376">Hydrogen peroxide</keyword>
<keyword id="KW-0408">Iron</keyword>
<keyword id="KW-0479">Metal-binding</keyword>
<keyword id="KW-0560">Oxidoreductase</keyword>
<keyword id="KW-0575">Peroxidase</keyword>
<organism>
    <name type="scientific">Parafrankia sp. (strain EAN1pec)</name>
    <dbReference type="NCBI Taxonomy" id="298653"/>
    <lineage>
        <taxon>Bacteria</taxon>
        <taxon>Bacillati</taxon>
        <taxon>Actinomycetota</taxon>
        <taxon>Actinomycetes</taxon>
        <taxon>Frankiales</taxon>
        <taxon>Frankiaceae</taxon>
        <taxon>Parafrankia</taxon>
    </lineage>
</organism>